<protein>
    <recommendedName>
        <fullName>Sakacin-A immunity factor</fullName>
    </recommendedName>
</protein>
<evidence type="ECO:0007829" key="1">
    <source>
        <dbReference type="PDB" id="7XTG"/>
    </source>
</evidence>
<accession>Q48864</accession>
<comment type="function">
    <text>Imparts immunity to sakacin-A to naturally sensitive host strains.</text>
</comment>
<gene>
    <name type="primary">saiA</name>
</gene>
<dbReference type="EMBL" id="Z46867">
    <property type="protein sequence ID" value="CAA86941.1"/>
    <property type="molecule type" value="Genomic_DNA"/>
</dbReference>
<dbReference type="PIR" id="B56273">
    <property type="entry name" value="B56273"/>
</dbReference>
<dbReference type="RefSeq" id="WP_076981511.1">
    <property type="nucleotide sequence ID" value="NZ_MKGH01000063.1"/>
</dbReference>
<dbReference type="PDB" id="7XNO">
    <property type="method" value="EM"/>
    <property type="resolution" value="2.54 A"/>
    <property type="chains" value="B/F/J=1-90"/>
</dbReference>
<dbReference type="PDB" id="7XTG">
    <property type="method" value="EM"/>
    <property type="resolution" value="2.20 A"/>
    <property type="chains" value="B/F/J=3-90"/>
</dbReference>
<dbReference type="PDBsum" id="7XNO"/>
<dbReference type="PDBsum" id="7XTG"/>
<dbReference type="EMDB" id="EMD-33321"/>
<dbReference type="EMDB" id="EMD-33448"/>
<dbReference type="SMR" id="Q48864"/>
<dbReference type="GO" id="GO:0030153">
    <property type="term" value="P:bacteriocin immunity"/>
    <property type="evidence" value="ECO:0007669"/>
    <property type="project" value="UniProtKB-KW"/>
</dbReference>
<dbReference type="SUPFAM" id="SSF109797">
    <property type="entry name" value="Bacteriocin immunity protein-like"/>
    <property type="match status" value="1"/>
</dbReference>
<keyword id="KW-0002">3D-structure</keyword>
<keyword id="KW-0079">Bacteriocin immunity</keyword>
<keyword id="KW-0614">Plasmid</keyword>
<feature type="chain" id="PRO_0000206202" description="Sakacin-A immunity factor">
    <location>
        <begin position="1"/>
        <end position="90"/>
    </location>
</feature>
<feature type="helix" evidence="1">
    <location>
        <begin position="5"/>
        <end position="18"/>
    </location>
</feature>
<feature type="helix" evidence="1">
    <location>
        <begin position="22"/>
        <end position="26"/>
    </location>
</feature>
<feature type="helix" evidence="1">
    <location>
        <begin position="28"/>
        <end position="42"/>
    </location>
</feature>
<feature type="helix" evidence="1">
    <location>
        <begin position="54"/>
        <end position="64"/>
    </location>
</feature>
<feature type="turn" evidence="1">
    <location>
        <begin position="65"/>
        <end position="67"/>
    </location>
</feature>
<feature type="helix" evidence="1">
    <location>
        <begin position="71"/>
        <end position="76"/>
    </location>
</feature>
<reference key="1">
    <citation type="journal article" date="1995" name="J. Bacteriol.">
        <title>The genes involved in production of and immunity to sakacin A, a bacteriocin from Lactobacillus sake Lb706.</title>
        <authorList>
            <person name="Axelsson L."/>
            <person name="Holck A."/>
        </authorList>
    </citation>
    <scope>NUCLEOTIDE SEQUENCE [GENOMIC DNA]</scope>
    <source>
        <strain>Lb706</strain>
    </source>
</reference>
<name>SAIA_LATSK</name>
<sequence length="90" mass="10458">MKADYKKINSILTYTSTALKNPKIIKDKDLVVLLTIIQEEAKQNRIFYDYKRKFRPAVTRFTIDNNFEIPDCLVKLLSAVETPKAWSGFS</sequence>
<organism>
    <name type="scientific">Latilactobacillus sakei</name>
    <name type="common">Lactobacillus sakei</name>
    <dbReference type="NCBI Taxonomy" id="1599"/>
    <lineage>
        <taxon>Bacteria</taxon>
        <taxon>Bacillati</taxon>
        <taxon>Bacillota</taxon>
        <taxon>Bacilli</taxon>
        <taxon>Lactobacillales</taxon>
        <taxon>Lactobacillaceae</taxon>
        <taxon>Latilactobacillus</taxon>
    </lineage>
</organism>
<geneLocation type="plasmid">
    <name>60 kb</name>
</geneLocation>
<proteinExistence type="evidence at protein level"/>